<comment type="catalytic activity">
    <reaction>
        <text>L-histidinol phosphate + 2-oxoglutarate = 3-(imidazol-4-yl)-2-oxopropyl phosphate + L-glutamate</text>
        <dbReference type="Rhea" id="RHEA:23744"/>
        <dbReference type="ChEBI" id="CHEBI:16810"/>
        <dbReference type="ChEBI" id="CHEBI:29985"/>
        <dbReference type="ChEBI" id="CHEBI:57766"/>
        <dbReference type="ChEBI" id="CHEBI:57980"/>
        <dbReference type="EC" id="2.6.1.9"/>
    </reaction>
</comment>
<comment type="cofactor">
    <cofactor evidence="1">
        <name>pyridoxal 5'-phosphate</name>
        <dbReference type="ChEBI" id="CHEBI:597326"/>
    </cofactor>
</comment>
<comment type="pathway">
    <text>Amino-acid biosynthesis; L-histidine biosynthesis; L-histidine from 5-phospho-alpha-D-ribose 1-diphosphate: step 7/9.</text>
</comment>
<comment type="subunit">
    <text evidence="1">Homodimer.</text>
</comment>
<comment type="similarity">
    <text evidence="2">Belongs to the class-II pyridoxal-phosphate-dependent aminotransferase family. Histidinol-phosphate aminotransferase subfamily.</text>
</comment>
<protein>
    <recommendedName>
        <fullName>Histidinol-phosphate aminotransferase 2</fullName>
        <ecNumber>2.6.1.9</ecNumber>
    </recommendedName>
    <alternativeName>
        <fullName>Imidazole acetol-phosphate transaminase 2</fullName>
    </alternativeName>
</protein>
<organism>
    <name type="scientific">Oceanobacillus iheyensis (strain DSM 14371 / CIP 107618 / JCM 11309 / KCTC 3954 / HTE831)</name>
    <dbReference type="NCBI Taxonomy" id="221109"/>
    <lineage>
        <taxon>Bacteria</taxon>
        <taxon>Bacillati</taxon>
        <taxon>Bacillota</taxon>
        <taxon>Bacilli</taxon>
        <taxon>Bacillales</taxon>
        <taxon>Bacillaceae</taxon>
        <taxon>Oceanobacillus</taxon>
    </lineage>
</organism>
<reference key="1">
    <citation type="journal article" date="2002" name="Nucleic Acids Res.">
        <title>Genome sequence of Oceanobacillus iheyensis isolated from the Iheya Ridge and its unexpected adaptive capabilities to extreme environments.</title>
        <authorList>
            <person name="Takami H."/>
            <person name="Takaki Y."/>
            <person name="Uchiyama I."/>
        </authorList>
    </citation>
    <scope>NUCLEOTIDE SEQUENCE [LARGE SCALE GENOMIC DNA]</scope>
    <source>
        <strain>DSM 14371 / CIP 107618 / JCM 11309 / KCTC 3954 / HTE831</strain>
    </source>
</reference>
<keyword id="KW-0028">Amino-acid biosynthesis</keyword>
<keyword id="KW-0032">Aminotransferase</keyword>
<keyword id="KW-0368">Histidine biosynthesis</keyword>
<keyword id="KW-0663">Pyridoxal phosphate</keyword>
<keyword id="KW-1185">Reference proteome</keyword>
<keyword id="KW-0808">Transferase</keyword>
<name>HIS82_OCEIH</name>
<gene>
    <name type="primary">hisC2</name>
    <name type="ordered locus">OB1782</name>
</gene>
<proteinExistence type="inferred from homology"/>
<sequence>MQGKEILKQLSPYKQGKQIKDIQKDYQLDYIVKLASNENPYGYSKQVNEALSTENFDFHIYPDGYTSDLRTDLTQKLNIDESEIIFGSGSEEIIQLLCRSYIIPGSNVVMATPTFPQYKHYSLIENAEIKEIPTDKEGYHQLDKMLGSIDDHTAIVWLCTPNNPTGAAFSKEELITFLDNCPKEVLVVLDEAYYEYLHSDKDLDALQLRFTYSNVIVLRTFSKAYGLAGLRIGYGIANSTIIETLDKVRGPFNTNSVAQKAASYALKDQEFIQHTNQENYKNLTEFQHFLQRLGWGYYDSEANFLLVKTPISGMDVYEYLLRFGFIVRPGELLGIPKTVRVTIGKEQDMKELQKVLEQFDHELG</sequence>
<dbReference type="EC" id="2.6.1.9"/>
<dbReference type="EMBL" id="BA000028">
    <property type="protein sequence ID" value="BAC13738.1"/>
    <property type="molecule type" value="Genomic_DNA"/>
</dbReference>
<dbReference type="RefSeq" id="WP_011066181.1">
    <property type="nucleotide sequence ID" value="NC_004193.1"/>
</dbReference>
<dbReference type="SMR" id="Q8EQB9"/>
<dbReference type="STRING" id="221109.gene:10734022"/>
<dbReference type="KEGG" id="oih:OB1782"/>
<dbReference type="eggNOG" id="COG0079">
    <property type="taxonomic scope" value="Bacteria"/>
</dbReference>
<dbReference type="HOGENOM" id="CLU_017584_3_3_9"/>
<dbReference type="OrthoDB" id="9813612at2"/>
<dbReference type="PhylomeDB" id="Q8EQB9"/>
<dbReference type="UniPathway" id="UPA00031">
    <property type="reaction ID" value="UER00012"/>
</dbReference>
<dbReference type="Proteomes" id="UP000000822">
    <property type="component" value="Chromosome"/>
</dbReference>
<dbReference type="GO" id="GO:0004400">
    <property type="term" value="F:histidinol-phosphate transaminase activity"/>
    <property type="evidence" value="ECO:0007669"/>
    <property type="project" value="UniProtKB-UniRule"/>
</dbReference>
<dbReference type="GO" id="GO:0030170">
    <property type="term" value="F:pyridoxal phosphate binding"/>
    <property type="evidence" value="ECO:0007669"/>
    <property type="project" value="InterPro"/>
</dbReference>
<dbReference type="GO" id="GO:0000105">
    <property type="term" value="P:L-histidine biosynthetic process"/>
    <property type="evidence" value="ECO:0007669"/>
    <property type="project" value="UniProtKB-UniRule"/>
</dbReference>
<dbReference type="CDD" id="cd00609">
    <property type="entry name" value="AAT_like"/>
    <property type="match status" value="1"/>
</dbReference>
<dbReference type="Gene3D" id="3.90.1150.10">
    <property type="entry name" value="Aspartate Aminotransferase, domain 1"/>
    <property type="match status" value="1"/>
</dbReference>
<dbReference type="Gene3D" id="3.40.640.10">
    <property type="entry name" value="Type I PLP-dependent aspartate aminotransferase-like (Major domain)"/>
    <property type="match status" value="1"/>
</dbReference>
<dbReference type="HAMAP" id="MF_01023">
    <property type="entry name" value="HisC_aminotrans_2"/>
    <property type="match status" value="1"/>
</dbReference>
<dbReference type="InterPro" id="IPR001917">
    <property type="entry name" value="Aminotrans_II_pyridoxalP_BS"/>
</dbReference>
<dbReference type="InterPro" id="IPR004839">
    <property type="entry name" value="Aminotransferase_I/II_large"/>
</dbReference>
<dbReference type="InterPro" id="IPR005861">
    <property type="entry name" value="HisP_aminotrans"/>
</dbReference>
<dbReference type="InterPro" id="IPR050106">
    <property type="entry name" value="HistidinolP_aminotransfase"/>
</dbReference>
<dbReference type="InterPro" id="IPR015424">
    <property type="entry name" value="PyrdxlP-dep_Trfase"/>
</dbReference>
<dbReference type="InterPro" id="IPR015421">
    <property type="entry name" value="PyrdxlP-dep_Trfase_major"/>
</dbReference>
<dbReference type="InterPro" id="IPR015422">
    <property type="entry name" value="PyrdxlP-dep_Trfase_small"/>
</dbReference>
<dbReference type="NCBIfam" id="TIGR01141">
    <property type="entry name" value="hisC"/>
    <property type="match status" value="1"/>
</dbReference>
<dbReference type="PANTHER" id="PTHR43643:SF3">
    <property type="entry name" value="HISTIDINOL-PHOSPHATE AMINOTRANSFERASE"/>
    <property type="match status" value="1"/>
</dbReference>
<dbReference type="PANTHER" id="PTHR43643">
    <property type="entry name" value="HISTIDINOL-PHOSPHATE AMINOTRANSFERASE 2"/>
    <property type="match status" value="1"/>
</dbReference>
<dbReference type="Pfam" id="PF00155">
    <property type="entry name" value="Aminotran_1_2"/>
    <property type="match status" value="1"/>
</dbReference>
<dbReference type="SUPFAM" id="SSF53383">
    <property type="entry name" value="PLP-dependent transferases"/>
    <property type="match status" value="1"/>
</dbReference>
<dbReference type="PROSITE" id="PS00599">
    <property type="entry name" value="AA_TRANSFER_CLASS_2"/>
    <property type="match status" value="1"/>
</dbReference>
<accession>Q8EQB9</accession>
<feature type="chain" id="PRO_0000153408" description="Histidinol-phosphate aminotransferase 2">
    <location>
        <begin position="1"/>
        <end position="364"/>
    </location>
</feature>
<feature type="modified residue" description="N6-(pyridoxal phosphate)lysine" evidence="1">
    <location>
        <position position="223"/>
    </location>
</feature>
<evidence type="ECO:0000250" key="1"/>
<evidence type="ECO:0000305" key="2"/>